<accession>Q8X2F6</accession>
<feature type="chain" id="PRO_0000252167" description="Putative uncharacterized protein YafF">
    <location>
        <begin position="1"/>
        <end position="62"/>
    </location>
</feature>
<gene>
    <name type="primary">yafF</name>
    <name type="ordered locus">Z2252.1</name>
    <name type="ordered locus">ECs2063</name>
</gene>
<reference key="1">
    <citation type="journal article" date="2001" name="Nature">
        <title>Genome sequence of enterohaemorrhagic Escherichia coli O157:H7.</title>
        <authorList>
            <person name="Perna N.T."/>
            <person name="Plunkett G. III"/>
            <person name="Burland V."/>
            <person name="Mau B."/>
            <person name="Glasner J.D."/>
            <person name="Rose D.J."/>
            <person name="Mayhew G.F."/>
            <person name="Evans P.S."/>
            <person name="Gregor J."/>
            <person name="Kirkpatrick H.A."/>
            <person name="Posfai G."/>
            <person name="Hackett J."/>
            <person name="Klink S."/>
            <person name="Boutin A."/>
            <person name="Shao Y."/>
            <person name="Miller L."/>
            <person name="Grotbeck E.J."/>
            <person name="Davis N.W."/>
            <person name="Lim A."/>
            <person name="Dimalanta E.T."/>
            <person name="Potamousis K."/>
            <person name="Apodaca J."/>
            <person name="Anantharaman T.S."/>
            <person name="Lin J."/>
            <person name="Yen G."/>
            <person name="Schwartz D.C."/>
            <person name="Welch R.A."/>
            <person name="Blattner F.R."/>
        </authorList>
    </citation>
    <scope>NUCLEOTIDE SEQUENCE [LARGE SCALE GENOMIC DNA]</scope>
    <source>
        <strain>O157:H7 / EDL933 / ATCC 700927 / EHEC</strain>
    </source>
</reference>
<reference key="2">
    <citation type="journal article" date="2001" name="DNA Res.">
        <title>Complete genome sequence of enterohemorrhagic Escherichia coli O157:H7 and genomic comparison with a laboratory strain K-12.</title>
        <authorList>
            <person name="Hayashi T."/>
            <person name="Makino K."/>
            <person name="Ohnishi M."/>
            <person name="Kurokawa K."/>
            <person name="Ishii K."/>
            <person name="Yokoyama K."/>
            <person name="Han C.-G."/>
            <person name="Ohtsubo E."/>
            <person name="Nakayama K."/>
            <person name="Murata T."/>
            <person name="Tanaka M."/>
            <person name="Tobe T."/>
            <person name="Iida T."/>
            <person name="Takami H."/>
            <person name="Honda T."/>
            <person name="Sasakawa C."/>
            <person name="Ogasawara N."/>
            <person name="Yasunaga T."/>
            <person name="Kuhara S."/>
            <person name="Shiba T."/>
            <person name="Hattori M."/>
            <person name="Shinagawa H."/>
        </authorList>
    </citation>
    <scope>NUCLEOTIDE SEQUENCE [LARGE SCALE GENOMIC DNA]</scope>
    <source>
        <strain>O157:H7 / Sakai / RIMD 0509952 / EHEC</strain>
    </source>
</reference>
<sequence length="62" mass="6879">MNEDDCKIRRGNAAELFSGIRHIAINILTNDKVFKAGLRRKMRKAAMDRNYLASVLAGSGLS</sequence>
<dbReference type="EMBL" id="AE005174">
    <property type="status" value="NOT_ANNOTATED_CDS"/>
    <property type="molecule type" value="Genomic_DNA"/>
</dbReference>
<dbReference type="EMBL" id="BA000007">
    <property type="protein sequence ID" value="BAB35486.1"/>
    <property type="molecule type" value="Genomic_DNA"/>
</dbReference>
<dbReference type="PIR" id="G90886">
    <property type="entry name" value="G90886"/>
</dbReference>
<dbReference type="SMR" id="Q8X2F6"/>
<dbReference type="STRING" id="155864.Z0271"/>
<dbReference type="eggNOG" id="COG5433">
    <property type="taxonomic scope" value="Bacteria"/>
</dbReference>
<dbReference type="HOGENOM" id="CLU_046404_7_3_6"/>
<dbReference type="Proteomes" id="UP000000558">
    <property type="component" value="Chromosome"/>
</dbReference>
<dbReference type="Proteomes" id="UP000002519">
    <property type="component" value="Chromosome"/>
</dbReference>
<dbReference type="InterPro" id="IPR051698">
    <property type="entry name" value="Transposase_11-like"/>
</dbReference>
<dbReference type="PANTHER" id="PTHR30298">
    <property type="entry name" value="H REPEAT-ASSOCIATED PREDICTED TRANSPOSASE"/>
    <property type="match status" value="1"/>
</dbReference>
<dbReference type="PANTHER" id="PTHR30298:SF0">
    <property type="entry name" value="PROTEIN YBFL-RELATED"/>
    <property type="match status" value="1"/>
</dbReference>
<keyword id="KW-1185">Reference proteome</keyword>
<proteinExistence type="predicted"/>
<protein>
    <recommendedName>
        <fullName>Putative uncharacterized protein YafF</fullName>
    </recommendedName>
</protein>
<name>YAFF_ECO57</name>
<organism>
    <name type="scientific">Escherichia coli O157:H7</name>
    <dbReference type="NCBI Taxonomy" id="83334"/>
    <lineage>
        <taxon>Bacteria</taxon>
        <taxon>Pseudomonadati</taxon>
        <taxon>Pseudomonadota</taxon>
        <taxon>Gammaproteobacteria</taxon>
        <taxon>Enterobacterales</taxon>
        <taxon>Enterobacteriaceae</taxon>
        <taxon>Escherichia</taxon>
    </lineage>
</organism>